<evidence type="ECO:0000250" key="1">
    <source>
        <dbReference type="UniProtKB" id="P53805"/>
    </source>
</evidence>
<evidence type="ECO:0000250" key="2">
    <source>
        <dbReference type="UniProtKB" id="Q9JHG6"/>
    </source>
</evidence>
<evidence type="ECO:0000256" key="3">
    <source>
        <dbReference type="SAM" id="MobiDB-lite"/>
    </source>
</evidence>
<evidence type="ECO:0000305" key="4"/>
<protein>
    <recommendedName>
        <fullName>Calcipressin-1</fullName>
    </recommendedName>
    <alternativeName>
        <fullName>Down syndrome critical region protein 1</fullName>
    </alternativeName>
    <alternativeName>
        <fullName>Regulator of calcineurin 1</fullName>
    </alternativeName>
</protein>
<gene>
    <name type="primary">RCAN1</name>
    <name type="synonym">DSCR1</name>
</gene>
<proteinExistence type="evidence at transcript level"/>
<comment type="function">
    <text evidence="2">Inhibits calcineurin-dependent transcriptional responses by binding to the catalytic domain of calcineurin A. Could play a role during central nervous system development.</text>
</comment>
<comment type="subunit">
    <text evidence="1 2">Interacts with RAF1, PPP3R1 and PPP3CA.</text>
</comment>
<comment type="PTM">
    <text evidence="1">Phosphorylation increases its ability to inhibit calcineurin and decreases protein half-life.</text>
</comment>
<comment type="similarity">
    <text evidence="4">Belongs to the RCAN family.</text>
</comment>
<name>RCAN1_BOVIN</name>
<organism>
    <name type="scientific">Bos taurus</name>
    <name type="common">Bovine</name>
    <dbReference type="NCBI Taxonomy" id="9913"/>
    <lineage>
        <taxon>Eukaryota</taxon>
        <taxon>Metazoa</taxon>
        <taxon>Chordata</taxon>
        <taxon>Craniata</taxon>
        <taxon>Vertebrata</taxon>
        <taxon>Euteleostomi</taxon>
        <taxon>Mammalia</taxon>
        <taxon>Eutheria</taxon>
        <taxon>Laurasiatheria</taxon>
        <taxon>Artiodactyla</taxon>
        <taxon>Ruminantia</taxon>
        <taxon>Pecora</taxon>
        <taxon>Bovidae</taxon>
        <taxon>Bovinae</taxon>
        <taxon>Bos</taxon>
    </lineage>
</organism>
<dbReference type="EMBL" id="BT030515">
    <property type="protein sequence ID" value="ABQ12955.1"/>
    <property type="molecule type" value="mRNA"/>
</dbReference>
<dbReference type="EMBL" id="BC103185">
    <property type="protein sequence ID" value="AAI03186.1"/>
    <property type="molecule type" value="mRNA"/>
</dbReference>
<dbReference type="RefSeq" id="NP_001029851.1">
    <property type="nucleotide sequence ID" value="NM_001034679.1"/>
</dbReference>
<dbReference type="SMR" id="Q3ZBP4"/>
<dbReference type="FunCoup" id="Q3ZBP4">
    <property type="interactions" value="514"/>
</dbReference>
<dbReference type="STRING" id="9913.ENSBTAP00000065251"/>
<dbReference type="PaxDb" id="9913-ENSBTAP00000037080"/>
<dbReference type="Ensembl" id="ENSBTAT00000037243.3">
    <property type="protein sequence ID" value="ENSBTAP00000037080.2"/>
    <property type="gene ID" value="ENSBTAG00000020035.6"/>
</dbReference>
<dbReference type="GeneID" id="539640"/>
<dbReference type="KEGG" id="bta:539640"/>
<dbReference type="CTD" id="1827"/>
<dbReference type="VEuPathDB" id="HostDB:ENSBTAG00000020035"/>
<dbReference type="VGNC" id="VGNC:33820">
    <property type="gene designation" value="RCAN1"/>
</dbReference>
<dbReference type="eggNOG" id="KOG4019">
    <property type="taxonomic scope" value="Eukaryota"/>
</dbReference>
<dbReference type="GeneTree" id="ENSGT00940000159870"/>
<dbReference type="HOGENOM" id="CLU_076190_2_0_1"/>
<dbReference type="InParanoid" id="Q3ZBP4"/>
<dbReference type="OMA" id="RIMQTRC"/>
<dbReference type="OrthoDB" id="17212at2759"/>
<dbReference type="TreeFam" id="TF313579"/>
<dbReference type="Proteomes" id="UP000009136">
    <property type="component" value="Chromosome 1"/>
</dbReference>
<dbReference type="Bgee" id="ENSBTAG00000020035">
    <property type="expression patterns" value="Expressed in gluteus medius and 105 other cell types or tissues"/>
</dbReference>
<dbReference type="GO" id="GO:0005737">
    <property type="term" value="C:cytoplasm"/>
    <property type="evidence" value="ECO:0000318"/>
    <property type="project" value="GO_Central"/>
</dbReference>
<dbReference type="GO" id="GO:0005634">
    <property type="term" value="C:nucleus"/>
    <property type="evidence" value="ECO:0000318"/>
    <property type="project" value="GO_Central"/>
</dbReference>
<dbReference type="GO" id="GO:0008597">
    <property type="term" value="F:calcium-dependent protein serine/threonine phosphatase regulator activity"/>
    <property type="evidence" value="ECO:0000318"/>
    <property type="project" value="GO_Central"/>
</dbReference>
<dbReference type="GO" id="GO:0003676">
    <property type="term" value="F:nucleic acid binding"/>
    <property type="evidence" value="ECO:0007669"/>
    <property type="project" value="InterPro"/>
</dbReference>
<dbReference type="GO" id="GO:0004864">
    <property type="term" value="F:protein phosphatase inhibitor activity"/>
    <property type="evidence" value="ECO:0007669"/>
    <property type="project" value="Ensembl"/>
</dbReference>
<dbReference type="GO" id="GO:0033173">
    <property type="term" value="P:calcineurin-NFAT signaling cascade"/>
    <property type="evidence" value="ECO:0007669"/>
    <property type="project" value="Ensembl"/>
</dbReference>
<dbReference type="GO" id="GO:0019722">
    <property type="term" value="P:calcium-mediated signaling"/>
    <property type="evidence" value="ECO:0000318"/>
    <property type="project" value="GO_Central"/>
</dbReference>
<dbReference type="GO" id="GO:0031987">
    <property type="term" value="P:locomotion involved in locomotory behavior"/>
    <property type="evidence" value="ECO:0007669"/>
    <property type="project" value="Ensembl"/>
</dbReference>
<dbReference type="GO" id="GO:0070885">
    <property type="term" value="P:negative regulation of calcineurin-NFAT signaling cascade"/>
    <property type="evidence" value="ECO:0000250"/>
    <property type="project" value="UniProtKB"/>
</dbReference>
<dbReference type="GO" id="GO:0002931">
    <property type="term" value="P:response to ischemia"/>
    <property type="evidence" value="ECO:0007669"/>
    <property type="project" value="Ensembl"/>
</dbReference>
<dbReference type="GO" id="GO:0006979">
    <property type="term" value="P:response to oxidative stress"/>
    <property type="evidence" value="ECO:0007669"/>
    <property type="project" value="Ensembl"/>
</dbReference>
<dbReference type="GO" id="GO:0007614">
    <property type="term" value="P:short-term memory"/>
    <property type="evidence" value="ECO:0007669"/>
    <property type="project" value="Ensembl"/>
</dbReference>
<dbReference type="GO" id="GO:0048741">
    <property type="term" value="P:skeletal muscle fiber development"/>
    <property type="evidence" value="ECO:0007669"/>
    <property type="project" value="Ensembl"/>
</dbReference>
<dbReference type="CDD" id="cd12708">
    <property type="entry name" value="RRM_RCAN1"/>
    <property type="match status" value="1"/>
</dbReference>
<dbReference type="FunFam" id="3.30.70.330:FF:000221">
    <property type="entry name" value="calcipressin-1 isoform X1"/>
    <property type="match status" value="1"/>
</dbReference>
<dbReference type="Gene3D" id="3.30.70.330">
    <property type="match status" value="1"/>
</dbReference>
<dbReference type="InterPro" id="IPR006931">
    <property type="entry name" value="Calcipressin"/>
</dbReference>
<dbReference type="InterPro" id="IPR012677">
    <property type="entry name" value="Nucleotide-bd_a/b_plait_sf"/>
</dbReference>
<dbReference type="InterPro" id="IPR035979">
    <property type="entry name" value="RBD_domain_sf"/>
</dbReference>
<dbReference type="InterPro" id="IPR034906">
    <property type="entry name" value="RCAN1_RRM"/>
</dbReference>
<dbReference type="PANTHER" id="PTHR10300">
    <property type="entry name" value="CALCIPRESSIN"/>
    <property type="match status" value="1"/>
</dbReference>
<dbReference type="PANTHER" id="PTHR10300:SF4">
    <property type="entry name" value="CALCIPRESSIN-1"/>
    <property type="match status" value="1"/>
</dbReference>
<dbReference type="Pfam" id="PF04847">
    <property type="entry name" value="Calcipressin"/>
    <property type="match status" value="1"/>
</dbReference>
<dbReference type="SUPFAM" id="SSF54928">
    <property type="entry name" value="RNA-binding domain, RBD"/>
    <property type="match status" value="1"/>
</dbReference>
<reference key="1">
    <citation type="journal article" date="2005" name="BMC Genomics">
        <title>Characterization of 954 bovine full-CDS cDNA sequences.</title>
        <authorList>
            <person name="Harhay G.P."/>
            <person name="Sonstegard T.S."/>
            <person name="Keele J.W."/>
            <person name="Heaton M.P."/>
            <person name="Clawson M.L."/>
            <person name="Snelling W.M."/>
            <person name="Wiedmann R.T."/>
            <person name="Van Tassell C.P."/>
            <person name="Smith T.P.L."/>
        </authorList>
    </citation>
    <scope>NUCLEOTIDE SEQUENCE [LARGE SCALE MRNA]</scope>
</reference>
<reference key="2">
    <citation type="submission" date="2005-08" db="EMBL/GenBank/DDBJ databases">
        <authorList>
            <consortium name="NIH - Mammalian Gene Collection (MGC) project"/>
        </authorList>
    </citation>
    <scope>NUCLEOTIDE SEQUENCE [LARGE SCALE MRNA]</scope>
    <source>
        <strain>Hereford</strain>
        <tissue>Heart ventricle</tissue>
    </source>
</reference>
<sequence length="197" mass="22691">MHFRNFNYSFSSLIACVANSEIFSESETRAKFESLFRTYDKDITFQYFKSFKRVRINFSNPLSAADARLQLHKTEFLGKEMKLYFAQTLHIGSSHLAPPNPDKQFLISPPASPPVGWKQVEDATPVINYDLLYAISKLGPGEKYELHAATDTTPSVVVHVCESDQENEEEDEMERMKRPKPKIIQTRRPEYTPIHLS</sequence>
<feature type="chain" id="PRO_0000295266" description="Calcipressin-1">
    <location>
        <begin position="1"/>
        <end position="197"/>
    </location>
</feature>
<feature type="region of interest" description="Disordered" evidence="3">
    <location>
        <begin position="163"/>
        <end position="197"/>
    </location>
</feature>
<feature type="compositionally biased region" description="Acidic residues" evidence="3">
    <location>
        <begin position="163"/>
        <end position="173"/>
    </location>
</feature>
<feature type="modified residue" description="Phosphoserine" evidence="1">
    <location>
        <position position="108"/>
    </location>
</feature>
<feature type="modified residue" description="Phosphoserine" evidence="1">
    <location>
        <position position="112"/>
    </location>
</feature>
<feature type="modified residue" description="Phosphoserine" evidence="2">
    <location>
        <position position="163"/>
    </location>
</feature>
<keyword id="KW-0597">Phosphoprotein</keyword>
<keyword id="KW-1185">Reference proteome</keyword>
<accession>Q3ZBP4</accession>